<sequence length="325" mass="36219">MSWISPELIEILLTILKAVVILLVVVTCGAFMSFGERRLLGLFQNRYGPNRVGWGGSLQLVADMIKMFFKEDWIPKFSDRVIFTLAPMIAFTSLLLAFAIVPVSPGWVVADLNIGILFFLMMAGLAVYAVLFAGWSSNNKYSLLGAMRASAQTLSYEVFLGLSLMGVVAQAGSFNMTDIVNSQAHVWNVIPQFFGFITFAIAGVAVCHRHPFDQPEAEQELADGYHIEYSGMKFGLFFVGEYIGIVTISALMVTLFFGGWQGPLLPPFIWFALKTAFFMMMFILIRASLPRPRYDQVMSFGWKICLPLTLINLLVTAAVILWQAQ</sequence>
<protein>
    <recommendedName>
        <fullName evidence="1">NADH-quinone oxidoreductase subunit H</fullName>
        <ecNumber evidence="1">7.1.1.-</ecNumber>
    </recommendedName>
    <alternativeName>
        <fullName evidence="1">NADH dehydrogenase I subunit H</fullName>
    </alternativeName>
    <alternativeName>
        <fullName evidence="1">NDH-1 subunit H</fullName>
    </alternativeName>
</protein>
<accession>B2TW63</accession>
<dbReference type="EC" id="7.1.1.-" evidence="1"/>
<dbReference type="EMBL" id="CP001063">
    <property type="protein sequence ID" value="ACD09947.1"/>
    <property type="molecule type" value="Genomic_DNA"/>
</dbReference>
<dbReference type="RefSeq" id="WP_000118507.1">
    <property type="nucleotide sequence ID" value="NC_010658.1"/>
</dbReference>
<dbReference type="SMR" id="B2TW63"/>
<dbReference type="STRING" id="344609.SbBS512_E2658"/>
<dbReference type="GeneID" id="93774892"/>
<dbReference type="KEGG" id="sbc:SbBS512_E2658"/>
<dbReference type="HOGENOM" id="CLU_015134_0_1_6"/>
<dbReference type="Proteomes" id="UP000001030">
    <property type="component" value="Chromosome"/>
</dbReference>
<dbReference type="GO" id="GO:0005886">
    <property type="term" value="C:plasma membrane"/>
    <property type="evidence" value="ECO:0007669"/>
    <property type="project" value="UniProtKB-SubCell"/>
</dbReference>
<dbReference type="GO" id="GO:0003954">
    <property type="term" value="F:NADH dehydrogenase activity"/>
    <property type="evidence" value="ECO:0007669"/>
    <property type="project" value="TreeGrafter"/>
</dbReference>
<dbReference type="GO" id="GO:0016655">
    <property type="term" value="F:oxidoreductase activity, acting on NAD(P)H, quinone or similar compound as acceptor"/>
    <property type="evidence" value="ECO:0007669"/>
    <property type="project" value="UniProtKB-UniRule"/>
</dbReference>
<dbReference type="GO" id="GO:0048038">
    <property type="term" value="F:quinone binding"/>
    <property type="evidence" value="ECO:0007669"/>
    <property type="project" value="UniProtKB-KW"/>
</dbReference>
<dbReference type="GO" id="GO:0009060">
    <property type="term" value="P:aerobic respiration"/>
    <property type="evidence" value="ECO:0007669"/>
    <property type="project" value="TreeGrafter"/>
</dbReference>
<dbReference type="HAMAP" id="MF_01350">
    <property type="entry name" value="NDH1_NuoH"/>
    <property type="match status" value="1"/>
</dbReference>
<dbReference type="InterPro" id="IPR001694">
    <property type="entry name" value="NADH_UbQ_OxRdtase_su1/FPO"/>
</dbReference>
<dbReference type="InterPro" id="IPR018086">
    <property type="entry name" value="NADH_UbQ_OxRdtase_su1_CS"/>
</dbReference>
<dbReference type="NCBIfam" id="NF004740">
    <property type="entry name" value="PRK06076.1-1"/>
    <property type="match status" value="1"/>
</dbReference>
<dbReference type="NCBIfam" id="NF004741">
    <property type="entry name" value="PRK06076.1-2"/>
    <property type="match status" value="1"/>
</dbReference>
<dbReference type="PANTHER" id="PTHR11432">
    <property type="entry name" value="NADH DEHYDROGENASE SUBUNIT 1"/>
    <property type="match status" value="1"/>
</dbReference>
<dbReference type="PANTHER" id="PTHR11432:SF3">
    <property type="entry name" value="NADH-UBIQUINONE OXIDOREDUCTASE CHAIN 1"/>
    <property type="match status" value="1"/>
</dbReference>
<dbReference type="Pfam" id="PF00146">
    <property type="entry name" value="NADHdh"/>
    <property type="match status" value="1"/>
</dbReference>
<dbReference type="PROSITE" id="PS00667">
    <property type="entry name" value="COMPLEX1_ND1_1"/>
    <property type="match status" value="1"/>
</dbReference>
<dbReference type="PROSITE" id="PS00668">
    <property type="entry name" value="COMPLEX1_ND1_2"/>
    <property type="match status" value="1"/>
</dbReference>
<reference key="1">
    <citation type="submission" date="2008-05" db="EMBL/GenBank/DDBJ databases">
        <title>Complete sequence of Shigella boydii serotype 18 strain BS512.</title>
        <authorList>
            <person name="Rasko D.A."/>
            <person name="Rosovitz M."/>
            <person name="Maurelli A.T."/>
            <person name="Myers G."/>
            <person name="Seshadri R."/>
            <person name="Cer R."/>
            <person name="Jiang L."/>
            <person name="Ravel J."/>
            <person name="Sebastian Y."/>
        </authorList>
    </citation>
    <scope>NUCLEOTIDE SEQUENCE [LARGE SCALE GENOMIC DNA]</scope>
    <source>
        <strain>CDC 3083-94 / BS512</strain>
    </source>
</reference>
<comment type="function">
    <text evidence="1">NDH-1 shuttles electrons from NADH, via FMN and iron-sulfur (Fe-S) centers, to quinones in the respiratory chain. The immediate electron acceptor for the enzyme in this species is believed to be ubiquinone. Couples the redox reaction to proton translocation (for every two electrons transferred, four hydrogen ions are translocated across the cytoplasmic membrane), and thus conserves the redox energy in a proton gradient. This subunit may bind ubiquinone.</text>
</comment>
<comment type="catalytic activity">
    <reaction evidence="1">
        <text>a quinone + NADH + 5 H(+)(in) = a quinol + NAD(+) + 4 H(+)(out)</text>
        <dbReference type="Rhea" id="RHEA:57888"/>
        <dbReference type="ChEBI" id="CHEBI:15378"/>
        <dbReference type="ChEBI" id="CHEBI:24646"/>
        <dbReference type="ChEBI" id="CHEBI:57540"/>
        <dbReference type="ChEBI" id="CHEBI:57945"/>
        <dbReference type="ChEBI" id="CHEBI:132124"/>
    </reaction>
</comment>
<comment type="subunit">
    <text evidence="1">NDH-1 is composed of 13 different subunits. Subunits NuoA, H, J, K, L, M, N constitute the membrane sector of the complex.</text>
</comment>
<comment type="subcellular location">
    <subcellularLocation>
        <location evidence="1">Cell inner membrane</location>
        <topology evidence="1">Multi-pass membrane protein</topology>
    </subcellularLocation>
</comment>
<comment type="similarity">
    <text evidence="1">Belongs to the complex I subunit 1 family.</text>
</comment>
<proteinExistence type="inferred from homology"/>
<feature type="chain" id="PRO_1000143620" description="NADH-quinone oxidoreductase subunit H">
    <location>
        <begin position="1"/>
        <end position="325"/>
    </location>
</feature>
<feature type="transmembrane region" description="Helical" evidence="1">
    <location>
        <begin position="11"/>
        <end position="31"/>
    </location>
</feature>
<feature type="transmembrane region" description="Helical" evidence="1">
    <location>
        <begin position="81"/>
        <end position="101"/>
    </location>
</feature>
<feature type="transmembrane region" description="Helical" evidence="1">
    <location>
        <begin position="114"/>
        <end position="134"/>
    </location>
</feature>
<feature type="transmembrane region" description="Helical" evidence="1">
    <location>
        <begin position="154"/>
        <end position="174"/>
    </location>
</feature>
<feature type="transmembrane region" description="Helical" evidence="1">
    <location>
        <begin position="186"/>
        <end position="206"/>
    </location>
</feature>
<feature type="transmembrane region" description="Helical" evidence="1">
    <location>
        <begin position="237"/>
        <end position="257"/>
    </location>
</feature>
<feature type="transmembrane region" description="Helical" evidence="1">
    <location>
        <begin position="265"/>
        <end position="285"/>
    </location>
</feature>
<feature type="transmembrane region" description="Helical" evidence="1">
    <location>
        <begin position="304"/>
        <end position="324"/>
    </location>
</feature>
<gene>
    <name evidence="1" type="primary">nuoH</name>
    <name type="ordered locus">SbBS512_E2658</name>
</gene>
<name>NUOH_SHIB3</name>
<organism>
    <name type="scientific">Shigella boydii serotype 18 (strain CDC 3083-94 / BS512)</name>
    <dbReference type="NCBI Taxonomy" id="344609"/>
    <lineage>
        <taxon>Bacteria</taxon>
        <taxon>Pseudomonadati</taxon>
        <taxon>Pseudomonadota</taxon>
        <taxon>Gammaproteobacteria</taxon>
        <taxon>Enterobacterales</taxon>
        <taxon>Enterobacteriaceae</taxon>
        <taxon>Shigella</taxon>
    </lineage>
</organism>
<evidence type="ECO:0000255" key="1">
    <source>
        <dbReference type="HAMAP-Rule" id="MF_01350"/>
    </source>
</evidence>
<keyword id="KW-0997">Cell inner membrane</keyword>
<keyword id="KW-1003">Cell membrane</keyword>
<keyword id="KW-0472">Membrane</keyword>
<keyword id="KW-0520">NAD</keyword>
<keyword id="KW-0874">Quinone</keyword>
<keyword id="KW-1185">Reference proteome</keyword>
<keyword id="KW-1278">Translocase</keyword>
<keyword id="KW-0812">Transmembrane</keyword>
<keyword id="KW-1133">Transmembrane helix</keyword>
<keyword id="KW-0830">Ubiquinone</keyword>